<reference key="1">
    <citation type="journal article" date="2004" name="Nat. Biotechnol.">
        <title>The genome sequence of the capnophilic rumen bacterium Mannheimia succiniciproducens.</title>
        <authorList>
            <person name="Hong S.H."/>
            <person name="Kim J.S."/>
            <person name="Lee S.Y."/>
            <person name="In Y.H."/>
            <person name="Choi S.S."/>
            <person name="Rih J.-K."/>
            <person name="Kim C.H."/>
            <person name="Jeong H."/>
            <person name="Hur C.G."/>
            <person name="Kim J.J."/>
        </authorList>
    </citation>
    <scope>NUCLEOTIDE SEQUENCE [LARGE SCALE GENOMIC DNA]</scope>
    <source>
        <strain>KCTC 0769BP / MBEL55E</strain>
    </source>
</reference>
<evidence type="ECO:0000255" key="1">
    <source>
        <dbReference type="HAMAP-Rule" id="MF_00460"/>
    </source>
</evidence>
<evidence type="ECO:0000256" key="2">
    <source>
        <dbReference type="SAM" id="MobiDB-lite"/>
    </source>
</evidence>
<accession>Q65V45</accession>
<feature type="chain" id="PRO_1000013580" description="Protein RnfH">
    <location>
        <begin position="1"/>
        <end position="110"/>
    </location>
</feature>
<feature type="region of interest" description="Disordered" evidence="2">
    <location>
        <begin position="86"/>
        <end position="110"/>
    </location>
</feature>
<feature type="compositionally biased region" description="Basic and acidic residues" evidence="2">
    <location>
        <begin position="94"/>
        <end position="110"/>
    </location>
</feature>
<sequence length="110" mass="12726">MAQINIEITYAFPEHYYLKKFTLDEGTTVQSAILQSGILQQFTDIDLRENKIGIFSRPVKLTDSLNDGDRIEIYRPLLADPKEIRRKRAAQQAKDQEEKKKAEKSANKEN</sequence>
<dbReference type="EMBL" id="AE016827">
    <property type="protein sequence ID" value="AAU37165.1"/>
    <property type="molecule type" value="Genomic_DNA"/>
</dbReference>
<dbReference type="RefSeq" id="WP_011199737.1">
    <property type="nucleotide sequence ID" value="NC_006300.1"/>
</dbReference>
<dbReference type="SMR" id="Q65V45"/>
<dbReference type="STRING" id="221988.MS0558"/>
<dbReference type="KEGG" id="msu:MS0558"/>
<dbReference type="eggNOG" id="COG2914">
    <property type="taxonomic scope" value="Bacteria"/>
</dbReference>
<dbReference type="HOGENOM" id="CLU_150721_1_0_6"/>
<dbReference type="OrthoDB" id="9796575at2"/>
<dbReference type="Proteomes" id="UP000000607">
    <property type="component" value="Chromosome"/>
</dbReference>
<dbReference type="Gene3D" id="3.10.20.280">
    <property type="entry name" value="RnfH-like"/>
    <property type="match status" value="1"/>
</dbReference>
<dbReference type="HAMAP" id="MF_00460">
    <property type="entry name" value="UPF0125_RnfH"/>
    <property type="match status" value="1"/>
</dbReference>
<dbReference type="InterPro" id="IPR016155">
    <property type="entry name" value="Mopterin_synth/thiamin_S_b"/>
</dbReference>
<dbReference type="InterPro" id="IPR005346">
    <property type="entry name" value="RnfH"/>
</dbReference>
<dbReference type="InterPro" id="IPR037021">
    <property type="entry name" value="RnfH_sf"/>
</dbReference>
<dbReference type="NCBIfam" id="NF002490">
    <property type="entry name" value="PRK01777.1"/>
    <property type="match status" value="1"/>
</dbReference>
<dbReference type="PANTHER" id="PTHR37483">
    <property type="entry name" value="UPF0125 PROTEIN RATB"/>
    <property type="match status" value="1"/>
</dbReference>
<dbReference type="PANTHER" id="PTHR37483:SF1">
    <property type="entry name" value="UPF0125 PROTEIN RATB"/>
    <property type="match status" value="1"/>
</dbReference>
<dbReference type="Pfam" id="PF03658">
    <property type="entry name" value="Ub-RnfH"/>
    <property type="match status" value="1"/>
</dbReference>
<dbReference type="SUPFAM" id="SSF54285">
    <property type="entry name" value="MoaD/ThiS"/>
    <property type="match status" value="1"/>
</dbReference>
<proteinExistence type="inferred from homology"/>
<comment type="similarity">
    <text evidence="1">Belongs to the UPF0125 (RnfH) family.</text>
</comment>
<gene>
    <name evidence="1" type="primary">rnfH</name>
    <name type="ordered locus">MS0558</name>
</gene>
<name>RNFH_MANSM</name>
<organism>
    <name type="scientific">Mannheimia succiniciproducens (strain KCTC 0769BP / MBEL55E)</name>
    <dbReference type="NCBI Taxonomy" id="221988"/>
    <lineage>
        <taxon>Bacteria</taxon>
        <taxon>Pseudomonadati</taxon>
        <taxon>Pseudomonadota</taxon>
        <taxon>Gammaproteobacteria</taxon>
        <taxon>Pasteurellales</taxon>
        <taxon>Pasteurellaceae</taxon>
        <taxon>Basfia</taxon>
    </lineage>
</organism>
<protein>
    <recommendedName>
        <fullName evidence="1">Protein RnfH</fullName>
    </recommendedName>
</protein>